<gene>
    <name evidence="1" type="primary">ndhE</name>
</gene>
<dbReference type="EC" id="7.1.1.-" evidence="1"/>
<dbReference type="EMBL" id="EU118126">
    <property type="protein sequence ID" value="ABV02403.1"/>
    <property type="molecule type" value="Genomic_DNA"/>
</dbReference>
<dbReference type="RefSeq" id="YP_001468363.1">
    <property type="nucleotide sequence ID" value="NC_009808.1"/>
</dbReference>
<dbReference type="SMR" id="A7Y3L4"/>
<dbReference type="GeneID" id="5601273"/>
<dbReference type="GO" id="GO:0009535">
    <property type="term" value="C:chloroplast thylakoid membrane"/>
    <property type="evidence" value="ECO:0007669"/>
    <property type="project" value="UniProtKB-SubCell"/>
</dbReference>
<dbReference type="GO" id="GO:0030964">
    <property type="term" value="C:NADH dehydrogenase complex"/>
    <property type="evidence" value="ECO:0007669"/>
    <property type="project" value="TreeGrafter"/>
</dbReference>
<dbReference type="GO" id="GO:0016655">
    <property type="term" value="F:oxidoreductase activity, acting on NAD(P)H, quinone or similar compound as acceptor"/>
    <property type="evidence" value="ECO:0007669"/>
    <property type="project" value="UniProtKB-UniRule"/>
</dbReference>
<dbReference type="GO" id="GO:0048038">
    <property type="term" value="F:quinone binding"/>
    <property type="evidence" value="ECO:0007669"/>
    <property type="project" value="UniProtKB-KW"/>
</dbReference>
<dbReference type="GO" id="GO:0042773">
    <property type="term" value="P:ATP synthesis coupled electron transport"/>
    <property type="evidence" value="ECO:0007669"/>
    <property type="project" value="InterPro"/>
</dbReference>
<dbReference type="GO" id="GO:0019684">
    <property type="term" value="P:photosynthesis, light reaction"/>
    <property type="evidence" value="ECO:0007669"/>
    <property type="project" value="UniProtKB-UniRule"/>
</dbReference>
<dbReference type="FunFam" id="1.10.287.3510:FF:000001">
    <property type="entry name" value="NADH-quinone oxidoreductase subunit K"/>
    <property type="match status" value="1"/>
</dbReference>
<dbReference type="Gene3D" id="1.10.287.3510">
    <property type="match status" value="1"/>
</dbReference>
<dbReference type="HAMAP" id="MF_01456">
    <property type="entry name" value="NDH1_NuoK"/>
    <property type="match status" value="1"/>
</dbReference>
<dbReference type="InterPro" id="IPR001133">
    <property type="entry name" value="NADH_UbQ_OxRdtase_chain4L/K"/>
</dbReference>
<dbReference type="InterPro" id="IPR039428">
    <property type="entry name" value="NUOK/Mnh_C1-like"/>
</dbReference>
<dbReference type="NCBIfam" id="NF004320">
    <property type="entry name" value="PRK05715.1-2"/>
    <property type="match status" value="1"/>
</dbReference>
<dbReference type="NCBIfam" id="NF004322">
    <property type="entry name" value="PRK05715.1-4"/>
    <property type="match status" value="1"/>
</dbReference>
<dbReference type="PANTHER" id="PTHR11434:SF16">
    <property type="entry name" value="NADH-UBIQUINONE OXIDOREDUCTASE CHAIN 4L"/>
    <property type="match status" value="1"/>
</dbReference>
<dbReference type="PANTHER" id="PTHR11434">
    <property type="entry name" value="NADH-UBIQUINONE OXIDOREDUCTASE SUBUNIT ND4L"/>
    <property type="match status" value="1"/>
</dbReference>
<dbReference type="Pfam" id="PF00420">
    <property type="entry name" value="Oxidored_q2"/>
    <property type="match status" value="1"/>
</dbReference>
<proteinExistence type="inferred from homology"/>
<organism>
    <name type="scientific">Ipomoea purpurea</name>
    <name type="common">Common morning glory</name>
    <name type="synonym">Pharbitis purpurea</name>
    <dbReference type="NCBI Taxonomy" id="4121"/>
    <lineage>
        <taxon>Eukaryota</taxon>
        <taxon>Viridiplantae</taxon>
        <taxon>Streptophyta</taxon>
        <taxon>Embryophyta</taxon>
        <taxon>Tracheophyta</taxon>
        <taxon>Spermatophyta</taxon>
        <taxon>Magnoliopsida</taxon>
        <taxon>eudicotyledons</taxon>
        <taxon>Gunneridae</taxon>
        <taxon>Pentapetalae</taxon>
        <taxon>asterids</taxon>
        <taxon>lamiids</taxon>
        <taxon>Solanales</taxon>
        <taxon>Convolvulaceae</taxon>
        <taxon>Ipomoeeae</taxon>
        <taxon>Ipomoea</taxon>
    </lineage>
</organism>
<protein>
    <recommendedName>
        <fullName evidence="1">NAD(P)H-quinone oxidoreductase subunit 4L, chloroplastic</fullName>
        <ecNumber evidence="1">7.1.1.-</ecNumber>
    </recommendedName>
    <alternativeName>
        <fullName evidence="1">NAD(P)H dehydrogenase subunit 4L</fullName>
    </alternativeName>
    <alternativeName>
        <fullName evidence="1">NADH-plastoquinone oxidoreductase subunit 4L</fullName>
    </alternativeName>
</protein>
<sequence>MMLEYALVLSAFLFSIGIYGLITSRNMVRALMCLELILNAVNMNLVTFSYFFDNRQLKGDIFSIFIIAIAAAEAAIGLAIVSSIYRNRKSTRIDQSNLLNN</sequence>
<accession>A7Y3L4</accession>
<keyword id="KW-0150">Chloroplast</keyword>
<keyword id="KW-0472">Membrane</keyword>
<keyword id="KW-0520">NAD</keyword>
<keyword id="KW-0521">NADP</keyword>
<keyword id="KW-0934">Plastid</keyword>
<keyword id="KW-0618">Plastoquinone</keyword>
<keyword id="KW-0874">Quinone</keyword>
<keyword id="KW-0793">Thylakoid</keyword>
<keyword id="KW-1278">Translocase</keyword>
<keyword id="KW-0812">Transmembrane</keyword>
<keyword id="KW-1133">Transmembrane helix</keyword>
<keyword id="KW-0813">Transport</keyword>
<reference key="1">
    <citation type="journal article" date="2007" name="BMC Plant Biol.">
        <title>Complete plastid genome sequences suggest strong selection for retention of photosynthetic genes in the parasitic plant genus Cuscuta.</title>
        <authorList>
            <person name="McNeal J.R."/>
            <person name="Kuehl J.V."/>
            <person name="Boore J.L."/>
            <person name="dePamphilis C.W."/>
        </authorList>
    </citation>
    <scope>NUCLEOTIDE SEQUENCE [LARGE SCALE GENOMIC DNA]</scope>
</reference>
<geneLocation type="chloroplast"/>
<evidence type="ECO:0000255" key="1">
    <source>
        <dbReference type="HAMAP-Rule" id="MF_01456"/>
    </source>
</evidence>
<name>NU4LC_IPOPU</name>
<feature type="chain" id="PRO_0000360336" description="NAD(P)H-quinone oxidoreductase subunit 4L, chloroplastic">
    <location>
        <begin position="1"/>
        <end position="101"/>
    </location>
</feature>
<feature type="transmembrane region" description="Helical" evidence="1">
    <location>
        <begin position="2"/>
        <end position="22"/>
    </location>
</feature>
<feature type="transmembrane region" description="Helical" evidence="1">
    <location>
        <begin position="32"/>
        <end position="52"/>
    </location>
</feature>
<feature type="transmembrane region" description="Helical" evidence="1">
    <location>
        <begin position="61"/>
        <end position="81"/>
    </location>
</feature>
<comment type="function">
    <text evidence="1">NDH shuttles electrons from NAD(P)H:plastoquinone, via FMN and iron-sulfur (Fe-S) centers, to quinones in the photosynthetic chain and possibly in a chloroplast respiratory chain. The immediate electron acceptor for the enzyme in this species is believed to be plastoquinone. Couples the redox reaction to proton translocation, and thus conserves the redox energy in a proton gradient.</text>
</comment>
<comment type="catalytic activity">
    <reaction evidence="1">
        <text>a plastoquinone + NADH + (n+1) H(+)(in) = a plastoquinol + NAD(+) + n H(+)(out)</text>
        <dbReference type="Rhea" id="RHEA:42608"/>
        <dbReference type="Rhea" id="RHEA-COMP:9561"/>
        <dbReference type="Rhea" id="RHEA-COMP:9562"/>
        <dbReference type="ChEBI" id="CHEBI:15378"/>
        <dbReference type="ChEBI" id="CHEBI:17757"/>
        <dbReference type="ChEBI" id="CHEBI:57540"/>
        <dbReference type="ChEBI" id="CHEBI:57945"/>
        <dbReference type="ChEBI" id="CHEBI:62192"/>
    </reaction>
</comment>
<comment type="catalytic activity">
    <reaction evidence="1">
        <text>a plastoquinone + NADPH + (n+1) H(+)(in) = a plastoquinol + NADP(+) + n H(+)(out)</text>
        <dbReference type="Rhea" id="RHEA:42612"/>
        <dbReference type="Rhea" id="RHEA-COMP:9561"/>
        <dbReference type="Rhea" id="RHEA-COMP:9562"/>
        <dbReference type="ChEBI" id="CHEBI:15378"/>
        <dbReference type="ChEBI" id="CHEBI:17757"/>
        <dbReference type="ChEBI" id="CHEBI:57783"/>
        <dbReference type="ChEBI" id="CHEBI:58349"/>
        <dbReference type="ChEBI" id="CHEBI:62192"/>
    </reaction>
</comment>
<comment type="subunit">
    <text evidence="1">NDH is composed of at least 16 different subunits, 5 of which are encoded in the nucleus.</text>
</comment>
<comment type="subcellular location">
    <subcellularLocation>
        <location evidence="1">Plastid</location>
        <location evidence="1">Chloroplast thylakoid membrane</location>
        <topology evidence="1">Multi-pass membrane protein</topology>
    </subcellularLocation>
</comment>
<comment type="similarity">
    <text evidence="1">Belongs to the complex I subunit 4L family.</text>
</comment>